<sequence>MENLSMDLLYMAAAVMMGLAAIGAAIGIGILGGKFLEGAARQPDLIPLLRTQFFIVMGLVDAIPMIAVGLGLYVMFAVA</sequence>
<dbReference type="EMBL" id="CP000826">
    <property type="protein sequence ID" value="ABV39113.1"/>
    <property type="molecule type" value="Genomic_DNA"/>
</dbReference>
<dbReference type="SMR" id="A8G7M3"/>
<dbReference type="STRING" id="399741.Spro_0003"/>
<dbReference type="KEGG" id="spe:Spro_0003"/>
<dbReference type="eggNOG" id="ENOG5032S3K">
    <property type="taxonomic scope" value="Bacteria"/>
</dbReference>
<dbReference type="HOGENOM" id="CLU_148047_1_0_6"/>
<dbReference type="OrthoDB" id="9811659at2"/>
<dbReference type="GO" id="GO:0005886">
    <property type="term" value="C:plasma membrane"/>
    <property type="evidence" value="ECO:0007669"/>
    <property type="project" value="UniProtKB-SubCell"/>
</dbReference>
<dbReference type="GO" id="GO:0045259">
    <property type="term" value="C:proton-transporting ATP synthase complex"/>
    <property type="evidence" value="ECO:0007669"/>
    <property type="project" value="UniProtKB-KW"/>
</dbReference>
<dbReference type="GO" id="GO:0033177">
    <property type="term" value="C:proton-transporting two-sector ATPase complex, proton-transporting domain"/>
    <property type="evidence" value="ECO:0007669"/>
    <property type="project" value="InterPro"/>
</dbReference>
<dbReference type="GO" id="GO:0008289">
    <property type="term" value="F:lipid binding"/>
    <property type="evidence" value="ECO:0007669"/>
    <property type="project" value="UniProtKB-KW"/>
</dbReference>
<dbReference type="GO" id="GO:0046933">
    <property type="term" value="F:proton-transporting ATP synthase activity, rotational mechanism"/>
    <property type="evidence" value="ECO:0007669"/>
    <property type="project" value="UniProtKB-UniRule"/>
</dbReference>
<dbReference type="CDD" id="cd18185">
    <property type="entry name" value="ATP-synt_Fo_c_ATPE"/>
    <property type="match status" value="1"/>
</dbReference>
<dbReference type="FunFam" id="1.20.20.10:FF:000002">
    <property type="entry name" value="ATP synthase subunit c"/>
    <property type="match status" value="1"/>
</dbReference>
<dbReference type="Gene3D" id="1.20.20.10">
    <property type="entry name" value="F1F0 ATP synthase subunit C"/>
    <property type="match status" value="1"/>
</dbReference>
<dbReference type="HAMAP" id="MF_01396">
    <property type="entry name" value="ATP_synth_c_bact"/>
    <property type="match status" value="1"/>
</dbReference>
<dbReference type="InterPro" id="IPR005953">
    <property type="entry name" value="ATP_synth_csu_bac/chlpt"/>
</dbReference>
<dbReference type="InterPro" id="IPR000454">
    <property type="entry name" value="ATP_synth_F0_csu"/>
</dbReference>
<dbReference type="InterPro" id="IPR020537">
    <property type="entry name" value="ATP_synth_F0_csu_DDCD_BS"/>
</dbReference>
<dbReference type="InterPro" id="IPR038662">
    <property type="entry name" value="ATP_synth_F0_csu_sf"/>
</dbReference>
<dbReference type="InterPro" id="IPR002379">
    <property type="entry name" value="ATPase_proteolipid_c-like_dom"/>
</dbReference>
<dbReference type="InterPro" id="IPR035921">
    <property type="entry name" value="F/V-ATP_Csub_sf"/>
</dbReference>
<dbReference type="NCBIfam" id="TIGR01260">
    <property type="entry name" value="ATP_synt_c"/>
    <property type="match status" value="1"/>
</dbReference>
<dbReference type="NCBIfam" id="NF005363">
    <property type="entry name" value="PRK06876.1"/>
    <property type="match status" value="1"/>
</dbReference>
<dbReference type="Pfam" id="PF00137">
    <property type="entry name" value="ATP-synt_C"/>
    <property type="match status" value="1"/>
</dbReference>
<dbReference type="PRINTS" id="PR00124">
    <property type="entry name" value="ATPASEC"/>
</dbReference>
<dbReference type="SUPFAM" id="SSF81333">
    <property type="entry name" value="F1F0 ATP synthase subunit C"/>
    <property type="match status" value="1"/>
</dbReference>
<dbReference type="PROSITE" id="PS00605">
    <property type="entry name" value="ATPASE_C"/>
    <property type="match status" value="1"/>
</dbReference>
<organism>
    <name type="scientific">Serratia proteamaculans (strain 568)</name>
    <dbReference type="NCBI Taxonomy" id="399741"/>
    <lineage>
        <taxon>Bacteria</taxon>
        <taxon>Pseudomonadati</taxon>
        <taxon>Pseudomonadota</taxon>
        <taxon>Gammaproteobacteria</taxon>
        <taxon>Enterobacterales</taxon>
        <taxon>Yersiniaceae</taxon>
        <taxon>Serratia</taxon>
    </lineage>
</organism>
<reference key="1">
    <citation type="submission" date="2007-09" db="EMBL/GenBank/DDBJ databases">
        <title>Complete sequence of chromosome of Serratia proteamaculans 568.</title>
        <authorList>
            <consortium name="US DOE Joint Genome Institute"/>
            <person name="Copeland A."/>
            <person name="Lucas S."/>
            <person name="Lapidus A."/>
            <person name="Barry K."/>
            <person name="Glavina del Rio T."/>
            <person name="Dalin E."/>
            <person name="Tice H."/>
            <person name="Pitluck S."/>
            <person name="Chain P."/>
            <person name="Malfatti S."/>
            <person name="Shin M."/>
            <person name="Vergez L."/>
            <person name="Schmutz J."/>
            <person name="Larimer F."/>
            <person name="Land M."/>
            <person name="Hauser L."/>
            <person name="Kyrpides N."/>
            <person name="Kim E."/>
            <person name="Taghavi S."/>
            <person name="Newman L."/>
            <person name="Vangronsveld J."/>
            <person name="van der Lelie D."/>
            <person name="Richardson P."/>
        </authorList>
    </citation>
    <scope>NUCLEOTIDE SEQUENCE [LARGE SCALE GENOMIC DNA]</scope>
    <source>
        <strain>568</strain>
    </source>
</reference>
<protein>
    <recommendedName>
        <fullName evidence="1">ATP synthase subunit c</fullName>
    </recommendedName>
    <alternativeName>
        <fullName evidence="1">ATP synthase F(0) sector subunit c</fullName>
    </alternativeName>
    <alternativeName>
        <fullName evidence="1">F-type ATPase subunit c</fullName>
        <shortName evidence="1">F-ATPase subunit c</shortName>
    </alternativeName>
    <alternativeName>
        <fullName evidence="1">Lipid-binding protein</fullName>
    </alternativeName>
</protein>
<name>ATPL_SERP5</name>
<gene>
    <name evidence="1" type="primary">atpE</name>
    <name type="ordered locus">Spro_0003</name>
</gene>
<accession>A8G7M3</accession>
<proteinExistence type="inferred from homology"/>
<feature type="chain" id="PRO_1000184466" description="ATP synthase subunit c">
    <location>
        <begin position="1"/>
        <end position="79"/>
    </location>
</feature>
<feature type="transmembrane region" description="Helical" evidence="1">
    <location>
        <begin position="11"/>
        <end position="31"/>
    </location>
</feature>
<feature type="transmembrane region" description="Helical" evidence="1">
    <location>
        <begin position="53"/>
        <end position="73"/>
    </location>
</feature>
<feature type="site" description="Reversibly protonated during proton transport" evidence="1">
    <location>
        <position position="61"/>
    </location>
</feature>
<keyword id="KW-0066">ATP synthesis</keyword>
<keyword id="KW-0997">Cell inner membrane</keyword>
<keyword id="KW-1003">Cell membrane</keyword>
<keyword id="KW-0138">CF(0)</keyword>
<keyword id="KW-0375">Hydrogen ion transport</keyword>
<keyword id="KW-0406">Ion transport</keyword>
<keyword id="KW-0446">Lipid-binding</keyword>
<keyword id="KW-0472">Membrane</keyword>
<keyword id="KW-0812">Transmembrane</keyword>
<keyword id="KW-1133">Transmembrane helix</keyword>
<keyword id="KW-0813">Transport</keyword>
<evidence type="ECO:0000255" key="1">
    <source>
        <dbReference type="HAMAP-Rule" id="MF_01396"/>
    </source>
</evidence>
<comment type="function">
    <text evidence="1">F(1)F(0) ATP synthase produces ATP from ADP in the presence of a proton or sodium gradient. F-type ATPases consist of two structural domains, F(1) containing the extramembraneous catalytic core and F(0) containing the membrane proton channel, linked together by a central stalk and a peripheral stalk. During catalysis, ATP synthesis in the catalytic domain of F(1) is coupled via a rotary mechanism of the central stalk subunits to proton translocation.</text>
</comment>
<comment type="function">
    <text evidence="1">Key component of the F(0) channel; it plays a direct role in translocation across the membrane. A homomeric c-ring of between 10-14 subunits forms the central stalk rotor element with the F(1) delta and epsilon subunits.</text>
</comment>
<comment type="subunit">
    <text evidence="1">F-type ATPases have 2 components, F(1) - the catalytic core - and F(0) - the membrane proton channel. F(1) has five subunits: alpha(3), beta(3), gamma(1), delta(1), epsilon(1). F(0) has three main subunits: a(1), b(2) and c(10-14). The alpha and beta chains form an alternating ring which encloses part of the gamma chain. F(1) is attached to F(0) by a central stalk formed by the gamma and epsilon chains, while a peripheral stalk is formed by the delta and b chains.</text>
</comment>
<comment type="subcellular location">
    <subcellularLocation>
        <location evidence="1">Cell inner membrane</location>
        <topology evidence="1">Multi-pass membrane protein</topology>
    </subcellularLocation>
</comment>
<comment type="similarity">
    <text evidence="1">Belongs to the ATPase C chain family.</text>
</comment>